<sequence length="706" mass="77600">MSSRVLASRAAQPLKRHPTVVGAGDEAYPTPRRCFSSLHDRTVNQSADFSSTSKNYDRLGRRAKEKLLDREFFMSLLNSASTKREAKSYLARLKAQQPAKPQKKLQSTTVQQTIAESLPSGVNLGSFYGASRSVYQSPVFRQDSTPAPAREDIPERLHLALVKIKTPQLLDDSTLDGVARTLSQINRLGLACCVVVDPGSDGDTHTLRKIATEQVGRIATAVDRQPDSKSSHLYSVLSFPAKRPDIPTVSSRKQLLSPLRDGHILIVAPIAYTEDTPKALMVPANDAVLALTKELAGLATMPDPDEDPMITAQKINDLQKEVSLDRVILLDPLGGVPAFRGPQTSHAFINMDQEFEHIERELLQVRNPANNSQGESVVTNPISDSNAVSESASTEPTSTPAKQALLPMSVGEDTIDGHLDNLRLSQQTLAMLPSASSGIITSPVEVANSARSLESSPSELSVGTRRQRNPLIHNLLTDKPLLSSSLPLSRRARGSLHLPAPPTTFVKRGMPVSLIPDPRVQVWTAQTRPNMNLDDPHVDLPRLVHLIEDSFNRKLDVKDYLNRVNGRLAGLIIAGEYEGGAILTWELPPGVEDDGSESSTARMVPYLDKFAVLKRSQGAGGVADIVFNAMVRTCFPNGVCWRSRKDNPVNKWYFERSLGSWKLADTNWTMFWTTPDLPEKPQKFRDYEAVCRSIQPSWAEDTGVID</sequence>
<gene>
    <name type="primary">arg2</name>
    <name type="synonym">ornD</name>
    <name type="ORF">AN5867</name>
</gene>
<reference key="1">
    <citation type="journal article" date="2005" name="Nature">
        <title>Sequencing of Aspergillus nidulans and comparative analysis with A. fumigatus and A. oryzae.</title>
        <authorList>
            <person name="Galagan J.E."/>
            <person name="Calvo S.E."/>
            <person name="Cuomo C."/>
            <person name="Ma L.-J."/>
            <person name="Wortman J.R."/>
            <person name="Batzoglou S."/>
            <person name="Lee S.-I."/>
            <person name="Bastuerkmen M."/>
            <person name="Spevak C.C."/>
            <person name="Clutterbuck J."/>
            <person name="Kapitonov V."/>
            <person name="Jurka J."/>
            <person name="Scazzocchio C."/>
            <person name="Farman M.L."/>
            <person name="Butler J."/>
            <person name="Purcell S."/>
            <person name="Harris S."/>
            <person name="Braus G.H."/>
            <person name="Draht O."/>
            <person name="Busch S."/>
            <person name="D'Enfert C."/>
            <person name="Bouchier C."/>
            <person name="Goldman G.H."/>
            <person name="Bell-Pedersen D."/>
            <person name="Griffiths-Jones S."/>
            <person name="Doonan J.H."/>
            <person name="Yu J."/>
            <person name="Vienken K."/>
            <person name="Pain A."/>
            <person name="Freitag M."/>
            <person name="Selker E.U."/>
            <person name="Archer D.B."/>
            <person name="Penalva M.A."/>
            <person name="Oakley B.R."/>
            <person name="Momany M."/>
            <person name="Tanaka T."/>
            <person name="Kumagai T."/>
            <person name="Asai K."/>
            <person name="Machida M."/>
            <person name="Nierman W.C."/>
            <person name="Denning D.W."/>
            <person name="Caddick M.X."/>
            <person name="Hynes M."/>
            <person name="Paoletti M."/>
            <person name="Fischer R."/>
            <person name="Miller B.L."/>
            <person name="Dyer P.S."/>
            <person name="Sachs M.S."/>
            <person name="Osmani S.A."/>
            <person name="Birren B.W."/>
        </authorList>
    </citation>
    <scope>NUCLEOTIDE SEQUENCE [LARGE SCALE GENOMIC DNA]</scope>
    <source>
        <strain>FGSC A4 / ATCC 38163 / CBS 112.46 / NRRL 194 / M139</strain>
    </source>
</reference>
<reference key="2">
    <citation type="journal article" date="2009" name="Fungal Genet. Biol.">
        <title>The 2008 update of the Aspergillus nidulans genome annotation: a community effort.</title>
        <authorList>
            <person name="Wortman J.R."/>
            <person name="Gilsenan J.M."/>
            <person name="Joardar V."/>
            <person name="Deegan J."/>
            <person name="Clutterbuck J."/>
            <person name="Andersen M.R."/>
            <person name="Archer D."/>
            <person name="Bencina M."/>
            <person name="Braus G."/>
            <person name="Coutinho P."/>
            <person name="von Dohren H."/>
            <person name="Doonan J."/>
            <person name="Driessen A.J."/>
            <person name="Durek P."/>
            <person name="Espeso E."/>
            <person name="Fekete E."/>
            <person name="Flipphi M."/>
            <person name="Estrada C.G."/>
            <person name="Geysens S."/>
            <person name="Goldman G."/>
            <person name="de Groot P.W."/>
            <person name="Hansen K."/>
            <person name="Harris S.D."/>
            <person name="Heinekamp T."/>
            <person name="Helmstaedt K."/>
            <person name="Henrissat B."/>
            <person name="Hofmann G."/>
            <person name="Homan T."/>
            <person name="Horio T."/>
            <person name="Horiuchi H."/>
            <person name="James S."/>
            <person name="Jones M."/>
            <person name="Karaffa L."/>
            <person name="Karanyi Z."/>
            <person name="Kato M."/>
            <person name="Keller N."/>
            <person name="Kelly D.E."/>
            <person name="Kiel J.A."/>
            <person name="Kim J.M."/>
            <person name="van der Klei I.J."/>
            <person name="Klis F.M."/>
            <person name="Kovalchuk A."/>
            <person name="Krasevec N."/>
            <person name="Kubicek C.P."/>
            <person name="Liu B."/>
            <person name="Maccabe A."/>
            <person name="Meyer V."/>
            <person name="Mirabito P."/>
            <person name="Miskei M."/>
            <person name="Mos M."/>
            <person name="Mullins J."/>
            <person name="Nelson D.R."/>
            <person name="Nielsen J."/>
            <person name="Oakley B.R."/>
            <person name="Osmani S.A."/>
            <person name="Pakula T."/>
            <person name="Paszewski A."/>
            <person name="Paulsen I."/>
            <person name="Pilsyk S."/>
            <person name="Pocsi I."/>
            <person name="Punt P.J."/>
            <person name="Ram A.F."/>
            <person name="Ren Q."/>
            <person name="Robellet X."/>
            <person name="Robson G."/>
            <person name="Seiboth B."/>
            <person name="van Solingen P."/>
            <person name="Specht T."/>
            <person name="Sun J."/>
            <person name="Taheri-Talesh N."/>
            <person name="Takeshita N."/>
            <person name="Ussery D."/>
            <person name="vanKuyk P.A."/>
            <person name="Visser H."/>
            <person name="van de Vondervoort P.J."/>
            <person name="de Vries R.P."/>
            <person name="Walton J."/>
            <person name="Xiang X."/>
            <person name="Xiong Y."/>
            <person name="Zeng A.P."/>
            <person name="Brandt B.W."/>
            <person name="Cornell M.J."/>
            <person name="van den Hondel C.A."/>
            <person name="Visser J."/>
            <person name="Oliver S.G."/>
            <person name="Turner G."/>
        </authorList>
    </citation>
    <scope>GENOME REANNOTATION</scope>
    <source>
        <strain>FGSC A4 / ATCC 38163 / CBS 112.46 / NRRL 194 / M139</strain>
    </source>
</reference>
<evidence type="ECO:0000250" key="1"/>
<evidence type="ECO:0000255" key="2"/>
<evidence type="ECO:0000255" key="3">
    <source>
        <dbReference type="PROSITE-ProRule" id="PRU00532"/>
    </source>
</evidence>
<evidence type="ECO:0000256" key="4">
    <source>
        <dbReference type="SAM" id="MobiDB-lite"/>
    </source>
</evidence>
<evidence type="ECO:0000305" key="5"/>
<organism>
    <name type="scientific">Emericella nidulans (strain FGSC A4 / ATCC 38163 / CBS 112.46 / NRRL 194 / M139)</name>
    <name type="common">Aspergillus nidulans</name>
    <dbReference type="NCBI Taxonomy" id="227321"/>
    <lineage>
        <taxon>Eukaryota</taxon>
        <taxon>Fungi</taxon>
        <taxon>Dikarya</taxon>
        <taxon>Ascomycota</taxon>
        <taxon>Pezizomycotina</taxon>
        <taxon>Eurotiomycetes</taxon>
        <taxon>Eurotiomycetidae</taxon>
        <taxon>Eurotiales</taxon>
        <taxon>Aspergillaceae</taxon>
        <taxon>Aspergillus</taxon>
        <taxon>Aspergillus subgen. Nidulantes</taxon>
    </lineage>
</organism>
<name>NAGS_EMENI</name>
<comment type="function">
    <text evidence="1">N-acetylglutamate synthase involved in arginine biosynthesis.</text>
</comment>
<comment type="catalytic activity">
    <reaction>
        <text>L-glutamate + acetyl-CoA = N-acetyl-L-glutamate + CoA + H(+)</text>
        <dbReference type="Rhea" id="RHEA:24292"/>
        <dbReference type="ChEBI" id="CHEBI:15378"/>
        <dbReference type="ChEBI" id="CHEBI:29985"/>
        <dbReference type="ChEBI" id="CHEBI:44337"/>
        <dbReference type="ChEBI" id="CHEBI:57287"/>
        <dbReference type="ChEBI" id="CHEBI:57288"/>
        <dbReference type="EC" id="2.3.1.1"/>
    </reaction>
</comment>
<comment type="pathway">
    <text>Amino-acid biosynthesis; L-arginine biosynthesis; N(2)-acetyl-L-ornithine from L-glutamate: step 1/4.</text>
</comment>
<comment type="subcellular location">
    <subcellularLocation>
        <location evidence="1">Mitochondrion</location>
    </subcellularLocation>
</comment>
<comment type="similarity">
    <text evidence="5">Belongs to the acetyltransferase family.</text>
</comment>
<comment type="sequence caution" evidence="5">
    <conflict type="erroneous gene model prediction">
        <sequence resource="EMBL-CDS" id="EAA58376"/>
    </conflict>
</comment>
<feature type="transit peptide" description="Mitochondrion" evidence="2">
    <location>
        <begin position="1"/>
        <end position="35"/>
    </location>
</feature>
<feature type="chain" id="PRO_0000372563" description="Amino-acid acetyltransferase, mitochondrial">
    <location>
        <begin position="36"/>
        <end position="706"/>
    </location>
</feature>
<feature type="domain" description="N-acetyltransferase" evidence="3">
    <location>
        <begin position="527"/>
        <end position="696"/>
    </location>
</feature>
<feature type="region of interest" description="Disordered" evidence="4">
    <location>
        <begin position="1"/>
        <end position="25"/>
    </location>
</feature>
<feature type="region of interest" description="Disordered" evidence="4">
    <location>
        <begin position="367"/>
        <end position="403"/>
    </location>
</feature>
<feature type="compositionally biased region" description="Polar residues" evidence="4">
    <location>
        <begin position="367"/>
        <end position="388"/>
    </location>
</feature>
<feature type="compositionally biased region" description="Low complexity" evidence="4">
    <location>
        <begin position="389"/>
        <end position="401"/>
    </location>
</feature>
<accession>Q5B0R3</accession>
<accession>C8UZZ0</accession>
<protein>
    <recommendedName>
        <fullName>Amino-acid acetyltransferase, mitochondrial</fullName>
        <ecNumber>2.3.1.1</ecNumber>
    </recommendedName>
    <alternativeName>
        <fullName>Arginine-requiring protein 2</fullName>
    </alternativeName>
    <alternativeName>
        <fullName>Glutamate N-acetyltransferase</fullName>
    </alternativeName>
    <alternativeName>
        <fullName>N-acetylglutamate synthase</fullName>
        <shortName>AGS</shortName>
        <shortName>NAGS</shortName>
    </alternativeName>
</protein>
<dbReference type="EC" id="2.3.1.1"/>
<dbReference type="EMBL" id="AACD01000100">
    <property type="protein sequence ID" value="EAA58376.1"/>
    <property type="status" value="ALT_SEQ"/>
    <property type="molecule type" value="Genomic_DNA"/>
</dbReference>
<dbReference type="EMBL" id="BN001301">
    <property type="protein sequence ID" value="CBF70677.1"/>
    <property type="molecule type" value="Genomic_DNA"/>
</dbReference>
<dbReference type="RefSeq" id="XP_663471.1">
    <property type="nucleotide sequence ID" value="XM_658379.1"/>
</dbReference>
<dbReference type="SMR" id="Q5B0R3"/>
<dbReference type="FunCoup" id="Q5B0R3">
    <property type="interactions" value="107"/>
</dbReference>
<dbReference type="STRING" id="227321.Q5B0R3"/>
<dbReference type="EnsemblFungi" id="CBF70677">
    <property type="protein sequence ID" value="CBF70677"/>
    <property type="gene ID" value="ANIA_05867"/>
</dbReference>
<dbReference type="VEuPathDB" id="FungiDB:AN5867"/>
<dbReference type="eggNOG" id="KOG2436">
    <property type="taxonomic scope" value="Eukaryota"/>
</dbReference>
<dbReference type="HOGENOM" id="CLU_013088_0_0_1"/>
<dbReference type="InParanoid" id="Q5B0R3"/>
<dbReference type="OMA" id="NAMVRDC"/>
<dbReference type="OrthoDB" id="5585968at2759"/>
<dbReference type="UniPathway" id="UPA00068">
    <property type="reaction ID" value="UER00106"/>
</dbReference>
<dbReference type="Proteomes" id="UP000000560">
    <property type="component" value="Chromosome I"/>
</dbReference>
<dbReference type="GO" id="GO:0005759">
    <property type="term" value="C:mitochondrial matrix"/>
    <property type="evidence" value="ECO:0000318"/>
    <property type="project" value="GO_Central"/>
</dbReference>
<dbReference type="GO" id="GO:0004042">
    <property type="term" value="F:L-glutamate N-acetyltransferase activity"/>
    <property type="evidence" value="ECO:0000318"/>
    <property type="project" value="GO_Central"/>
</dbReference>
<dbReference type="GO" id="GO:0006526">
    <property type="term" value="P:L-arginine biosynthetic process"/>
    <property type="evidence" value="ECO:0000318"/>
    <property type="project" value="GO_Central"/>
</dbReference>
<dbReference type="GO" id="GO:0006592">
    <property type="term" value="P:ornithine biosynthetic process"/>
    <property type="evidence" value="ECO:0000318"/>
    <property type="project" value="GO_Central"/>
</dbReference>
<dbReference type="FunFam" id="3.40.630.30:FF:000049">
    <property type="entry name" value="Amino-acid acetyltransferase, mitochondrial"/>
    <property type="match status" value="1"/>
</dbReference>
<dbReference type="Gene3D" id="3.40.630.30">
    <property type="match status" value="1"/>
</dbReference>
<dbReference type="InterPro" id="IPR011190">
    <property type="entry name" value="GlcNAc_Synth_fun"/>
</dbReference>
<dbReference type="InterPro" id="IPR006855">
    <property type="entry name" value="Vertebrate-like_GNAT_dom"/>
</dbReference>
<dbReference type="PANTHER" id="PTHR23342:SF4">
    <property type="entry name" value="AMINO-ACID ACETYLTRANSFERASE, MITOCHONDRIAL"/>
    <property type="match status" value="1"/>
</dbReference>
<dbReference type="PANTHER" id="PTHR23342">
    <property type="entry name" value="N-ACETYLGLUTAMATE SYNTHASE"/>
    <property type="match status" value="1"/>
</dbReference>
<dbReference type="Pfam" id="PF04768">
    <property type="entry name" value="NAT"/>
    <property type="match status" value="1"/>
</dbReference>
<dbReference type="PIRSF" id="PIRSF007892">
    <property type="entry name" value="NAGS_fungal"/>
    <property type="match status" value="1"/>
</dbReference>
<dbReference type="PROSITE" id="PS51731">
    <property type="entry name" value="GNAT_NAGS"/>
    <property type="match status" value="1"/>
</dbReference>
<keyword id="KW-0012">Acyltransferase</keyword>
<keyword id="KW-0028">Amino-acid biosynthesis</keyword>
<keyword id="KW-0496">Mitochondrion</keyword>
<keyword id="KW-1185">Reference proteome</keyword>
<keyword id="KW-0808">Transferase</keyword>
<keyword id="KW-0809">Transit peptide</keyword>
<proteinExistence type="inferred from homology"/>